<name>ACCA_PHOPR</name>
<sequence length="319" mass="35048">MSLNFLEFEQPIAELEAKIEALRDVSRRDESASVDLDKEIEQLEKKSLELTKKIFSNLGAWQVAQLARHPERPYVFDYIEHIFTEFDALAGDRAFADDKALVGGIARLDGRPVMVIGHQKGRGTKEKVFRNFGMPKPEGYRKALRLMKMAERFKMPIITFIDTAGAYPGVGAEERGQSEAIATNLKAMAGLTVPVICNVVGEGGSGGALAIGVGDYVNMLQYSTYSVISPEGCASILWRDSNKAPQAAEAMGLTAGRLKELELIDSIIEEPLGGAHRDLEAISASLKATLVANLAELEALDTDELLERRYQRLMSYGYC</sequence>
<organism>
    <name type="scientific">Photobacterium profundum (strain SS9)</name>
    <dbReference type="NCBI Taxonomy" id="298386"/>
    <lineage>
        <taxon>Bacteria</taxon>
        <taxon>Pseudomonadati</taxon>
        <taxon>Pseudomonadota</taxon>
        <taxon>Gammaproteobacteria</taxon>
        <taxon>Vibrionales</taxon>
        <taxon>Vibrionaceae</taxon>
        <taxon>Photobacterium</taxon>
    </lineage>
</organism>
<reference key="1">
    <citation type="journal article" date="2005" name="Science">
        <title>Life at depth: Photobacterium profundum genome sequence and expression analysis.</title>
        <authorList>
            <person name="Vezzi A."/>
            <person name="Campanaro S."/>
            <person name="D'Angelo M."/>
            <person name="Simonato F."/>
            <person name="Vitulo N."/>
            <person name="Lauro F.M."/>
            <person name="Cestaro A."/>
            <person name="Malacrida G."/>
            <person name="Simionati B."/>
            <person name="Cannata N."/>
            <person name="Romualdi C."/>
            <person name="Bartlett D.H."/>
            <person name="Valle G."/>
        </authorList>
    </citation>
    <scope>NUCLEOTIDE SEQUENCE [LARGE SCALE GENOMIC DNA]</scope>
    <source>
        <strain>ATCC BAA-1253 / SS9</strain>
    </source>
</reference>
<dbReference type="EC" id="2.1.3.15" evidence="1"/>
<dbReference type="EMBL" id="CR378672">
    <property type="protein sequence ID" value="CAG21286.1"/>
    <property type="molecule type" value="Genomic_DNA"/>
</dbReference>
<dbReference type="RefSeq" id="WP_011219553.1">
    <property type="nucleotide sequence ID" value="NC_006370.1"/>
</dbReference>
<dbReference type="SMR" id="Q6LN40"/>
<dbReference type="STRING" id="298386.PBPRA2952"/>
<dbReference type="KEGG" id="ppr:PBPRA2952"/>
<dbReference type="eggNOG" id="COG0825">
    <property type="taxonomic scope" value="Bacteria"/>
</dbReference>
<dbReference type="HOGENOM" id="CLU_015486_0_2_6"/>
<dbReference type="UniPathway" id="UPA00655">
    <property type="reaction ID" value="UER00711"/>
</dbReference>
<dbReference type="Proteomes" id="UP000000593">
    <property type="component" value="Chromosome 1"/>
</dbReference>
<dbReference type="GO" id="GO:0009317">
    <property type="term" value="C:acetyl-CoA carboxylase complex"/>
    <property type="evidence" value="ECO:0007669"/>
    <property type="project" value="InterPro"/>
</dbReference>
<dbReference type="GO" id="GO:0003989">
    <property type="term" value="F:acetyl-CoA carboxylase activity"/>
    <property type="evidence" value="ECO:0007669"/>
    <property type="project" value="InterPro"/>
</dbReference>
<dbReference type="GO" id="GO:0005524">
    <property type="term" value="F:ATP binding"/>
    <property type="evidence" value="ECO:0007669"/>
    <property type="project" value="UniProtKB-KW"/>
</dbReference>
<dbReference type="GO" id="GO:0016743">
    <property type="term" value="F:carboxyl- or carbamoyltransferase activity"/>
    <property type="evidence" value="ECO:0007669"/>
    <property type="project" value="UniProtKB-UniRule"/>
</dbReference>
<dbReference type="GO" id="GO:0006633">
    <property type="term" value="P:fatty acid biosynthetic process"/>
    <property type="evidence" value="ECO:0007669"/>
    <property type="project" value="UniProtKB-KW"/>
</dbReference>
<dbReference type="GO" id="GO:2001295">
    <property type="term" value="P:malonyl-CoA biosynthetic process"/>
    <property type="evidence" value="ECO:0007669"/>
    <property type="project" value="UniProtKB-UniRule"/>
</dbReference>
<dbReference type="FunFam" id="3.90.226.10:FF:000008">
    <property type="entry name" value="Acetyl-coenzyme A carboxylase carboxyl transferase subunit alpha"/>
    <property type="match status" value="1"/>
</dbReference>
<dbReference type="Gene3D" id="3.90.226.10">
    <property type="entry name" value="2-enoyl-CoA Hydratase, Chain A, domain 1"/>
    <property type="match status" value="1"/>
</dbReference>
<dbReference type="HAMAP" id="MF_00823">
    <property type="entry name" value="AcetylCoA_CT_alpha"/>
    <property type="match status" value="1"/>
</dbReference>
<dbReference type="InterPro" id="IPR001095">
    <property type="entry name" value="Acetyl_CoA_COase_a_su"/>
</dbReference>
<dbReference type="InterPro" id="IPR029045">
    <property type="entry name" value="ClpP/crotonase-like_dom_sf"/>
</dbReference>
<dbReference type="InterPro" id="IPR011763">
    <property type="entry name" value="COA_CT_C"/>
</dbReference>
<dbReference type="NCBIfam" id="TIGR00513">
    <property type="entry name" value="accA"/>
    <property type="match status" value="1"/>
</dbReference>
<dbReference type="NCBIfam" id="NF041504">
    <property type="entry name" value="AccA_sub"/>
    <property type="match status" value="1"/>
</dbReference>
<dbReference type="NCBIfam" id="NF004344">
    <property type="entry name" value="PRK05724.1"/>
    <property type="match status" value="1"/>
</dbReference>
<dbReference type="PANTHER" id="PTHR42853">
    <property type="entry name" value="ACETYL-COENZYME A CARBOXYLASE CARBOXYL TRANSFERASE SUBUNIT ALPHA"/>
    <property type="match status" value="1"/>
</dbReference>
<dbReference type="PANTHER" id="PTHR42853:SF3">
    <property type="entry name" value="ACETYL-COENZYME A CARBOXYLASE CARBOXYL TRANSFERASE SUBUNIT ALPHA, CHLOROPLASTIC"/>
    <property type="match status" value="1"/>
</dbReference>
<dbReference type="Pfam" id="PF03255">
    <property type="entry name" value="ACCA"/>
    <property type="match status" value="1"/>
</dbReference>
<dbReference type="PRINTS" id="PR01069">
    <property type="entry name" value="ACCCTRFRASEA"/>
</dbReference>
<dbReference type="SUPFAM" id="SSF52096">
    <property type="entry name" value="ClpP/crotonase"/>
    <property type="match status" value="1"/>
</dbReference>
<dbReference type="PROSITE" id="PS50989">
    <property type="entry name" value="COA_CT_CTER"/>
    <property type="match status" value="1"/>
</dbReference>
<evidence type="ECO:0000255" key="1">
    <source>
        <dbReference type="HAMAP-Rule" id="MF_00823"/>
    </source>
</evidence>
<evidence type="ECO:0000255" key="2">
    <source>
        <dbReference type="PROSITE-ProRule" id="PRU01137"/>
    </source>
</evidence>
<protein>
    <recommendedName>
        <fullName evidence="1">Acetyl-coenzyme A carboxylase carboxyl transferase subunit alpha</fullName>
        <shortName evidence="1">ACCase subunit alpha</shortName>
        <shortName evidence="1">Acetyl-CoA carboxylase carboxyltransferase subunit alpha</shortName>
        <ecNumber evidence="1">2.1.3.15</ecNumber>
    </recommendedName>
</protein>
<feature type="chain" id="PRO_0000223799" description="Acetyl-coenzyme A carboxylase carboxyl transferase subunit alpha">
    <location>
        <begin position="1"/>
        <end position="319"/>
    </location>
</feature>
<feature type="domain" description="CoA carboxyltransferase C-terminal" evidence="2">
    <location>
        <begin position="35"/>
        <end position="296"/>
    </location>
</feature>
<accession>Q6LN40</accession>
<comment type="function">
    <text evidence="1">Component of the acetyl coenzyme A carboxylase (ACC) complex. First, biotin carboxylase catalyzes the carboxylation of biotin on its carrier protein (BCCP) and then the CO(2) group is transferred by the carboxyltransferase to acetyl-CoA to form malonyl-CoA.</text>
</comment>
<comment type="catalytic activity">
    <reaction evidence="1">
        <text>N(6)-carboxybiotinyl-L-lysyl-[protein] + acetyl-CoA = N(6)-biotinyl-L-lysyl-[protein] + malonyl-CoA</text>
        <dbReference type="Rhea" id="RHEA:54728"/>
        <dbReference type="Rhea" id="RHEA-COMP:10505"/>
        <dbReference type="Rhea" id="RHEA-COMP:10506"/>
        <dbReference type="ChEBI" id="CHEBI:57288"/>
        <dbReference type="ChEBI" id="CHEBI:57384"/>
        <dbReference type="ChEBI" id="CHEBI:83144"/>
        <dbReference type="ChEBI" id="CHEBI:83145"/>
        <dbReference type="EC" id="2.1.3.15"/>
    </reaction>
</comment>
<comment type="pathway">
    <text evidence="1">Lipid metabolism; malonyl-CoA biosynthesis; malonyl-CoA from acetyl-CoA: step 1/1.</text>
</comment>
<comment type="subunit">
    <text evidence="1">Acetyl-CoA carboxylase is a heterohexamer composed of biotin carboxyl carrier protein (AccB), biotin carboxylase (AccC) and two subunits each of ACCase subunit alpha (AccA) and ACCase subunit beta (AccD).</text>
</comment>
<comment type="subcellular location">
    <subcellularLocation>
        <location evidence="1">Cytoplasm</location>
    </subcellularLocation>
</comment>
<comment type="similarity">
    <text evidence="1">Belongs to the AccA family.</text>
</comment>
<gene>
    <name evidence="1" type="primary">accA</name>
    <name type="ordered locus">PBPRA2952</name>
</gene>
<proteinExistence type="inferred from homology"/>
<keyword id="KW-0067">ATP-binding</keyword>
<keyword id="KW-0963">Cytoplasm</keyword>
<keyword id="KW-0275">Fatty acid biosynthesis</keyword>
<keyword id="KW-0276">Fatty acid metabolism</keyword>
<keyword id="KW-0444">Lipid biosynthesis</keyword>
<keyword id="KW-0443">Lipid metabolism</keyword>
<keyword id="KW-0547">Nucleotide-binding</keyword>
<keyword id="KW-1185">Reference proteome</keyword>
<keyword id="KW-0808">Transferase</keyword>